<evidence type="ECO:0000255" key="1">
    <source>
        <dbReference type="HAMAP-Rule" id="MF_00233"/>
    </source>
</evidence>
<comment type="function">
    <text evidence="1">Plays a critical role in the incorporation of lipoproteins in the outer membrane after they are released by the LolA protein.</text>
</comment>
<comment type="subunit">
    <text evidence="1">Monomer.</text>
</comment>
<comment type="subcellular location">
    <subcellularLocation>
        <location evidence="1">Cell outer membrane</location>
        <topology evidence="1">Lipid-anchor</topology>
    </subcellularLocation>
</comment>
<comment type="similarity">
    <text evidence="1">Belongs to the LolB family.</text>
</comment>
<feature type="signal peptide" evidence="1">
    <location>
        <begin position="1"/>
        <end position="21"/>
    </location>
</feature>
<feature type="chain" id="PRO_1000078254" description="Outer-membrane lipoprotein LolB">
    <location>
        <begin position="22"/>
        <end position="207"/>
    </location>
</feature>
<feature type="lipid moiety-binding region" description="N-palmitoyl cysteine" evidence="1">
    <location>
        <position position="22"/>
    </location>
</feature>
<feature type="lipid moiety-binding region" description="S-diacylglycerol cysteine" evidence="1">
    <location>
        <position position="22"/>
    </location>
</feature>
<name>LOLB_ECOLC</name>
<sequence>MPLPDFRLIRLLPLAALVLTACSVTTPKGPGKSPDSPQWRQHQQDVRNLNQYQTRGAFAYISDQQKVYARFFWQQTGQDRYRLLLTNPLGSTELELNAQPGNVQLVDNKGQRYTADDAEEMIGKLTGMPIPLNSLRQWILGLPGDATDYKLDDQYRLSEITYSQNGKNWKVVYGGYDTKTQPAMPANMELTDGGQRIKLKMDNWIVK</sequence>
<protein>
    <recommendedName>
        <fullName evidence="1">Outer-membrane lipoprotein LolB</fullName>
    </recommendedName>
</protein>
<reference key="1">
    <citation type="submission" date="2008-02" db="EMBL/GenBank/DDBJ databases">
        <title>Complete sequence of Escherichia coli C str. ATCC 8739.</title>
        <authorList>
            <person name="Copeland A."/>
            <person name="Lucas S."/>
            <person name="Lapidus A."/>
            <person name="Glavina del Rio T."/>
            <person name="Dalin E."/>
            <person name="Tice H."/>
            <person name="Bruce D."/>
            <person name="Goodwin L."/>
            <person name="Pitluck S."/>
            <person name="Kiss H."/>
            <person name="Brettin T."/>
            <person name="Detter J.C."/>
            <person name="Han C."/>
            <person name="Kuske C.R."/>
            <person name="Schmutz J."/>
            <person name="Larimer F."/>
            <person name="Land M."/>
            <person name="Hauser L."/>
            <person name="Kyrpides N."/>
            <person name="Mikhailova N."/>
            <person name="Ingram L."/>
            <person name="Richardson P."/>
        </authorList>
    </citation>
    <scope>NUCLEOTIDE SEQUENCE [LARGE SCALE GENOMIC DNA]</scope>
    <source>
        <strain>ATCC 8739 / DSM 1576 / NBRC 3972 / NCIMB 8545 / WDCM 00012 / Crooks</strain>
    </source>
</reference>
<organism>
    <name type="scientific">Escherichia coli (strain ATCC 8739 / DSM 1576 / NBRC 3972 / NCIMB 8545 / WDCM 00012 / Crooks)</name>
    <dbReference type="NCBI Taxonomy" id="481805"/>
    <lineage>
        <taxon>Bacteria</taxon>
        <taxon>Pseudomonadati</taxon>
        <taxon>Pseudomonadota</taxon>
        <taxon>Gammaproteobacteria</taxon>
        <taxon>Enterobacterales</taxon>
        <taxon>Enterobacteriaceae</taxon>
        <taxon>Escherichia</taxon>
    </lineage>
</organism>
<proteinExistence type="inferred from homology"/>
<accession>B1IU84</accession>
<gene>
    <name evidence="1" type="primary">lolB</name>
    <name type="ordered locus">EcolC_2417</name>
</gene>
<keyword id="KW-0998">Cell outer membrane</keyword>
<keyword id="KW-0143">Chaperone</keyword>
<keyword id="KW-0449">Lipoprotein</keyword>
<keyword id="KW-0472">Membrane</keyword>
<keyword id="KW-0564">Palmitate</keyword>
<keyword id="KW-0653">Protein transport</keyword>
<keyword id="KW-0732">Signal</keyword>
<keyword id="KW-0813">Transport</keyword>
<dbReference type="EMBL" id="CP000946">
    <property type="protein sequence ID" value="ACA78051.1"/>
    <property type="molecule type" value="Genomic_DNA"/>
</dbReference>
<dbReference type="RefSeq" id="WP_001130692.1">
    <property type="nucleotide sequence ID" value="NZ_MTFT01000016.1"/>
</dbReference>
<dbReference type="BMRB" id="B1IU84"/>
<dbReference type="SMR" id="B1IU84"/>
<dbReference type="GeneID" id="93775274"/>
<dbReference type="KEGG" id="ecl:EcolC_2417"/>
<dbReference type="HOGENOM" id="CLU_092816_1_1_6"/>
<dbReference type="GO" id="GO:0009279">
    <property type="term" value="C:cell outer membrane"/>
    <property type="evidence" value="ECO:0007669"/>
    <property type="project" value="UniProtKB-SubCell"/>
</dbReference>
<dbReference type="GO" id="GO:0044874">
    <property type="term" value="P:lipoprotein localization to outer membrane"/>
    <property type="evidence" value="ECO:0007669"/>
    <property type="project" value="UniProtKB-UniRule"/>
</dbReference>
<dbReference type="GO" id="GO:0015031">
    <property type="term" value="P:protein transport"/>
    <property type="evidence" value="ECO:0007669"/>
    <property type="project" value="UniProtKB-KW"/>
</dbReference>
<dbReference type="CDD" id="cd16326">
    <property type="entry name" value="LolB"/>
    <property type="match status" value="1"/>
</dbReference>
<dbReference type="FunFam" id="2.50.20.10:FF:000002">
    <property type="entry name" value="Outer-membrane lipoprotein LolB"/>
    <property type="match status" value="1"/>
</dbReference>
<dbReference type="Gene3D" id="2.50.20.10">
    <property type="entry name" value="Lipoprotein localisation LolA/LolB/LppX"/>
    <property type="match status" value="1"/>
</dbReference>
<dbReference type="HAMAP" id="MF_00233">
    <property type="entry name" value="LolB"/>
    <property type="match status" value="1"/>
</dbReference>
<dbReference type="InterPro" id="IPR029046">
    <property type="entry name" value="LolA/LolB/LppX"/>
</dbReference>
<dbReference type="InterPro" id="IPR004565">
    <property type="entry name" value="OM_lipoprot_LolB"/>
</dbReference>
<dbReference type="NCBIfam" id="TIGR00548">
    <property type="entry name" value="lolB"/>
    <property type="match status" value="1"/>
</dbReference>
<dbReference type="Pfam" id="PF03550">
    <property type="entry name" value="LolB"/>
    <property type="match status" value="1"/>
</dbReference>
<dbReference type="SUPFAM" id="SSF89392">
    <property type="entry name" value="Prokaryotic lipoproteins and lipoprotein localization factors"/>
    <property type="match status" value="1"/>
</dbReference>
<dbReference type="PROSITE" id="PS51257">
    <property type="entry name" value="PROKAR_LIPOPROTEIN"/>
    <property type="match status" value="1"/>
</dbReference>